<sequence length="399" mass="45522">MSPPSASRRTREEVDATLQVAKLNATELLPTVHCLSFSSGTGGAATGDFCLLELEPALCQQLEAGDSFVIRGDKDEQAVLCSKDKTYDLKIADTSNMLLFIPGCKTPDQLKEEETPSAIVHTEIFGFSNNYWELRRCRPKLKKLKRLLMENTYEGPDSQKEEDASRSKYTTEDLLNHIQASEEEIMAQLQVLNACEIGGYWRILEFDYEIKLLNHVTQLVDSESWSLDRVPLTVCLQELGPLEPEEMIEHCLKCYGKRYVDKDDVYFELDADKICRVTAEMLLQNAVKFNLAEFQEVWQQSVPEGMTTRLDQLKGLALVDRNSRPEIIFLLKVDDLPEGTQDRFNSLFSLREKWTEEDITPYIQDLCGEKQTIGALLTKYSRSSMQNGIKVYNSRRLIS</sequence>
<protein>
    <recommendedName>
        <fullName>Sister chromatid cohesion protein DCC1</fullName>
    </recommendedName>
    <alternativeName>
        <fullName>Defective in sister chromatid cohesion protein 1 homolog</fullName>
    </alternativeName>
</protein>
<evidence type="ECO:0000250" key="1"/>
<evidence type="ECO:0000250" key="2">
    <source>
        <dbReference type="UniProtKB" id="Q9BVC3"/>
    </source>
</evidence>
<evidence type="ECO:0000305" key="3"/>
<reference key="1">
    <citation type="journal article" date="2004" name="Genome Res.">
        <title>The status, quality, and expansion of the NIH full-length cDNA project: the Mammalian Gene Collection (MGC).</title>
        <authorList>
            <consortium name="The MGC Project Team"/>
        </authorList>
    </citation>
    <scope>NUCLEOTIDE SEQUENCE [LARGE SCALE MRNA]</scope>
    <source>
        <tissue>Brain</tissue>
        <tissue>Oocyte</tissue>
    </source>
</reference>
<comment type="function">
    <text evidence="1">Loads PCNA onto primed templates regulating velocity, spacing and restart activity of replication forks. May couple DNA replication to sister chromatid cohesion through regulation of the acetylation of the cohesin subunit SMC3 (By similarity).</text>
</comment>
<comment type="subunit">
    <text evidence="2">Component of the CTF18-RFC complex which consists of CTF8, CTF18, DSCC1 and the RFC complex. Interacts with CTF8 and CTF18. Interacts with DDX11.</text>
</comment>
<comment type="subcellular location">
    <subcellularLocation>
        <location evidence="1">Nucleus</location>
    </subcellularLocation>
</comment>
<comment type="similarity">
    <text evidence="3">Belongs to the DCC1 family.</text>
</comment>
<keyword id="KW-0131">Cell cycle</keyword>
<keyword id="KW-0235">DNA replication</keyword>
<keyword id="KW-0238">DNA-binding</keyword>
<keyword id="KW-0539">Nucleus</keyword>
<keyword id="KW-1185">Reference proteome</keyword>
<dbReference type="EMBL" id="BC099382">
    <property type="protein sequence ID" value="AAH99382.1"/>
    <property type="molecule type" value="mRNA"/>
</dbReference>
<dbReference type="EMBL" id="BC116833">
    <property type="protein sequence ID" value="AAI16834.1"/>
    <property type="molecule type" value="mRNA"/>
</dbReference>
<dbReference type="EMBL" id="BC116835">
    <property type="protein sequence ID" value="AAI16836.1"/>
    <property type="molecule type" value="mRNA"/>
</dbReference>
<dbReference type="CCDS" id="CCDS27473.1"/>
<dbReference type="RefSeq" id="NP_898912.2">
    <property type="nucleotide sequence ID" value="NM_183089.2"/>
</dbReference>
<dbReference type="SMR" id="Q14AI0"/>
<dbReference type="FunCoup" id="Q14AI0">
    <property type="interactions" value="2257"/>
</dbReference>
<dbReference type="STRING" id="10090.ENSMUSP00000023059"/>
<dbReference type="PhosphoSitePlus" id="Q14AI0"/>
<dbReference type="PaxDb" id="10090-ENSMUSP00000023059"/>
<dbReference type="ProteomicsDB" id="279161"/>
<dbReference type="Pumba" id="Q14AI0"/>
<dbReference type="Antibodypedia" id="26822">
    <property type="antibodies" value="203 antibodies from 23 providers"/>
</dbReference>
<dbReference type="Ensembl" id="ENSMUST00000023059.13">
    <property type="protein sequence ID" value="ENSMUSP00000023059.7"/>
    <property type="gene ID" value="ENSMUSG00000022422.14"/>
</dbReference>
<dbReference type="GeneID" id="72107"/>
<dbReference type="KEGG" id="mmu:72107"/>
<dbReference type="UCSC" id="uc007vrw.1">
    <property type="organism name" value="mouse"/>
</dbReference>
<dbReference type="AGR" id="MGI:1919357"/>
<dbReference type="CTD" id="79075"/>
<dbReference type="MGI" id="MGI:1919357">
    <property type="gene designation" value="Dscc1"/>
</dbReference>
<dbReference type="VEuPathDB" id="HostDB:ENSMUSG00000022422"/>
<dbReference type="eggNOG" id="KOG0798">
    <property type="taxonomic scope" value="Eukaryota"/>
</dbReference>
<dbReference type="GeneTree" id="ENSGT00390000017400"/>
<dbReference type="InParanoid" id="Q14AI0"/>
<dbReference type="OMA" id="DSESWPF"/>
<dbReference type="OrthoDB" id="5199543at2759"/>
<dbReference type="PhylomeDB" id="Q14AI0"/>
<dbReference type="TreeFam" id="TF106104"/>
<dbReference type="Reactome" id="R-MMU-174411">
    <property type="pathway name" value="Polymerase switching on the C-strand of the telomere"/>
</dbReference>
<dbReference type="BioGRID-ORCS" id="72107">
    <property type="hits" value="18 hits in 78 CRISPR screens"/>
</dbReference>
<dbReference type="PRO" id="PR:Q14AI0"/>
<dbReference type="Proteomes" id="UP000000589">
    <property type="component" value="Chromosome 15"/>
</dbReference>
<dbReference type="RNAct" id="Q14AI0">
    <property type="molecule type" value="protein"/>
</dbReference>
<dbReference type="Bgee" id="ENSMUSG00000022422">
    <property type="expression patterns" value="Expressed in manus and 139 other cell types or tissues"/>
</dbReference>
<dbReference type="ExpressionAtlas" id="Q14AI0">
    <property type="expression patterns" value="baseline and differential"/>
</dbReference>
<dbReference type="GO" id="GO:0000785">
    <property type="term" value="C:chromatin"/>
    <property type="evidence" value="ECO:0000250"/>
    <property type="project" value="UniProtKB"/>
</dbReference>
<dbReference type="GO" id="GO:0000775">
    <property type="term" value="C:chromosome, centromeric region"/>
    <property type="evidence" value="ECO:0007669"/>
    <property type="project" value="Ensembl"/>
</dbReference>
<dbReference type="GO" id="GO:0031390">
    <property type="term" value="C:Ctf18 RFC-like complex"/>
    <property type="evidence" value="ECO:0000250"/>
    <property type="project" value="UniProtKB"/>
</dbReference>
<dbReference type="GO" id="GO:0005654">
    <property type="term" value="C:nucleoplasm"/>
    <property type="evidence" value="ECO:0007669"/>
    <property type="project" value="Ensembl"/>
</dbReference>
<dbReference type="GO" id="GO:0003677">
    <property type="term" value="F:DNA binding"/>
    <property type="evidence" value="ECO:0007669"/>
    <property type="project" value="UniProtKB-KW"/>
</dbReference>
<dbReference type="GO" id="GO:0003689">
    <property type="term" value="F:DNA clamp loader activity"/>
    <property type="evidence" value="ECO:0007669"/>
    <property type="project" value="Ensembl"/>
</dbReference>
<dbReference type="GO" id="GO:0017116">
    <property type="term" value="F:single-stranded DNA helicase activity"/>
    <property type="evidence" value="ECO:0007669"/>
    <property type="project" value="Ensembl"/>
</dbReference>
<dbReference type="GO" id="GO:0006260">
    <property type="term" value="P:DNA replication"/>
    <property type="evidence" value="ECO:0007669"/>
    <property type="project" value="UniProtKB-KW"/>
</dbReference>
<dbReference type="GO" id="GO:0034088">
    <property type="term" value="P:maintenance of mitotic sister chromatid cohesion"/>
    <property type="evidence" value="ECO:0000250"/>
    <property type="project" value="UniProtKB"/>
</dbReference>
<dbReference type="GO" id="GO:1900264">
    <property type="term" value="P:positive regulation of DNA-directed DNA polymerase activity"/>
    <property type="evidence" value="ECO:0000250"/>
    <property type="project" value="UniProtKB"/>
</dbReference>
<dbReference type="GO" id="GO:0034421">
    <property type="term" value="P:post-translational protein acetylation"/>
    <property type="evidence" value="ECO:0000250"/>
    <property type="project" value="UniProtKB"/>
</dbReference>
<dbReference type="GO" id="GO:0006275">
    <property type="term" value="P:regulation of DNA replication"/>
    <property type="evidence" value="ECO:0000250"/>
    <property type="project" value="UniProtKB"/>
</dbReference>
<dbReference type="InterPro" id="IPR019128">
    <property type="entry name" value="Dcc1"/>
</dbReference>
<dbReference type="PANTHER" id="PTHR13395:SF6">
    <property type="entry name" value="SISTER CHROMATID COHESION PROTEIN DCC1"/>
    <property type="match status" value="1"/>
</dbReference>
<dbReference type="PANTHER" id="PTHR13395">
    <property type="entry name" value="SISTER CHROMATID COHESION PROTEIN DCC1-RELATED"/>
    <property type="match status" value="1"/>
</dbReference>
<dbReference type="Pfam" id="PF09724">
    <property type="entry name" value="Dcc1"/>
    <property type="match status" value="1"/>
</dbReference>
<accession>Q14AI0</accession>
<accession>Q4FZL5</accession>
<feature type="chain" id="PRO_0000318065" description="Sister chromatid cohesion protein DCC1">
    <location>
        <begin position="1"/>
        <end position="399"/>
    </location>
</feature>
<gene>
    <name type="primary">DSCC1</name>
    <name type="synonym">DCC1</name>
</gene>
<organism>
    <name type="scientific">Mus musculus</name>
    <name type="common">Mouse</name>
    <dbReference type="NCBI Taxonomy" id="10090"/>
    <lineage>
        <taxon>Eukaryota</taxon>
        <taxon>Metazoa</taxon>
        <taxon>Chordata</taxon>
        <taxon>Craniata</taxon>
        <taxon>Vertebrata</taxon>
        <taxon>Euteleostomi</taxon>
        <taxon>Mammalia</taxon>
        <taxon>Eutheria</taxon>
        <taxon>Euarchontoglires</taxon>
        <taxon>Glires</taxon>
        <taxon>Rodentia</taxon>
        <taxon>Myomorpha</taxon>
        <taxon>Muroidea</taxon>
        <taxon>Muridae</taxon>
        <taxon>Murinae</taxon>
        <taxon>Mus</taxon>
        <taxon>Mus</taxon>
    </lineage>
</organism>
<proteinExistence type="evidence at transcript level"/>
<name>DCC1_MOUSE</name>